<organism>
    <name type="scientific">Bos taurus</name>
    <name type="common">Bovine</name>
    <dbReference type="NCBI Taxonomy" id="9913"/>
    <lineage>
        <taxon>Eukaryota</taxon>
        <taxon>Metazoa</taxon>
        <taxon>Chordata</taxon>
        <taxon>Craniata</taxon>
        <taxon>Vertebrata</taxon>
        <taxon>Euteleostomi</taxon>
        <taxon>Mammalia</taxon>
        <taxon>Eutheria</taxon>
        <taxon>Laurasiatheria</taxon>
        <taxon>Artiodactyla</taxon>
        <taxon>Ruminantia</taxon>
        <taxon>Pecora</taxon>
        <taxon>Bovidae</taxon>
        <taxon>Bovinae</taxon>
        <taxon>Bos</taxon>
    </lineage>
</organism>
<comment type="function">
    <text evidence="1">Zinc metalloprotease that mediates intramembrane proteolysis of proteins such as ATF6, ATF6B, SREBF1/SREBP1 and SREBF2/SREBP2. Catalyzes the second step in the proteolytic activation of the sterol regulatory element-binding proteins (SREBPs) SREBF1/SREBP1 and SREBF2/SREBP2: cleaves SREBPs within the first transmembrane segment, thereby releasing the N-terminal segment with a portion of the transmembrane segment attached. Mature N-terminal SREBP fragments shuttle to the nucleus and activate gene transcription. Also mediates the second step in the proteolytic activation of the cyclic AMP-dependent transcription factor ATF-6 (ATF6 and ATF6B). Involved in intramembrane proteolysis during bone formation. In astrocytes and osteoblasts, upon DNA damage and ER stress, mediates the second step of the regulated intramembrane proteolytic activation of the transcription factor CREB3L1, leading to the inhibition of cell-cycle progression.</text>
</comment>
<comment type="catalytic activity">
    <reaction evidence="1">
        <text>Cleaves several transcription factors that are type-2 transmembrane proteins within membrane-spanning domains. Known substrates include sterol regulatory element-binding protein (SREBP) -1, SREBP-2 and forms of the transcriptional activator ATF6. SREBP-2 is cleaved at the site 477-DRSRILL-|-CVLTFLCLSFNPLTSLLQWGGA-505. The residues Asn-Pro, 11 residues distal to the site of cleavage in the membrane-spanning domain, are important for cleavage by S2P endopeptidase. Replacement of either of these residues does not prevent cleavage, but there is no cleavage if both of these residues are replaced.</text>
        <dbReference type="EC" id="3.4.24.85"/>
    </reaction>
</comment>
<comment type="cofactor">
    <cofactor evidence="1">
        <name>Zn(2+)</name>
        <dbReference type="ChEBI" id="CHEBI:29105"/>
    </cofactor>
    <text evidence="1">Binds 1 zinc ion per subunit.</text>
</comment>
<comment type="subcellular location">
    <subcellularLocation>
        <location evidence="1">Membrane</location>
        <topology evidence="2">Multi-pass membrane protein</topology>
    </subcellularLocation>
    <subcellularLocation>
        <location evidence="1">Cytoplasm</location>
    </subcellularLocation>
    <subcellularLocation>
        <location evidence="1">Golgi apparatus membrane</location>
        <topology evidence="2">Multi-pass membrane protein</topology>
    </subcellularLocation>
</comment>
<comment type="similarity">
    <text evidence="4">Belongs to the peptidase M50A family.</text>
</comment>
<gene>
    <name evidence="1" type="primary">MBTPS2</name>
</gene>
<reference key="1">
    <citation type="submission" date="2006-08" db="EMBL/GenBank/DDBJ databases">
        <authorList>
            <consortium name="NIH - Mammalian Gene Collection (MGC) project"/>
        </authorList>
    </citation>
    <scope>NUCLEOTIDE SEQUENCE [LARGE SCALE MRNA]</scope>
    <source>
        <strain>Hereford</strain>
        <tissue>Basal ganglia</tissue>
    </source>
</reference>
<sequence>MIPVSLVVVVVGGWTAVYLTDLVLKSSVYFKHSYEDWLENNGLSISPFHIRWQTAVFNRAFYSWGRRKARMLYQWFNFGMVFGVIAMFSSFFLLGKTLIQTLGQMMADSSYSSSSSSSSHSSSSSSSSSSSSSLYNEQVLQVVVPGINLPVNQLTYFFAAVLISGVVHEIGHGIAAIREQVRFNGFGIFLFIIYPGAFVDLFTTHLQLISPVQQLRIFCAGIWHNFILALLGILALILLPVILLPFYYTGVGVLITEVAEDSPAIGPRGLFVGDLVTHLQDCPVTNVQDWNECLDTITYEPQIGYCISASTLQQLSFPVRAYKRLDGSTECCNNHSLTDVCFSYRNNFNKRLHTCLPARKAVEATQVCRTNKDCKKSSSSSFCIIPSLETHTRLIKVKHPPQIDMLYVGHPLHLHYTVSITSFIPRFKFLSIDLPVVVETFVKYLISLSGALAIVNAVPCFALDGQWILNSFLDATLTSVIGDNDVKDLIGFFILLGGSILLAANVALGLWMVTAR</sequence>
<feature type="chain" id="PRO_0000261591" description="Membrane-bound transcription factor site-2 protease">
    <location>
        <begin position="1"/>
        <end position="516"/>
    </location>
</feature>
<feature type="topological domain" description="Cytoplasmic" evidence="1">
    <location>
        <begin position="1"/>
        <end position="3"/>
    </location>
</feature>
<feature type="transmembrane region" description="Helical" evidence="2">
    <location>
        <begin position="4"/>
        <end position="24"/>
    </location>
</feature>
<feature type="topological domain" description="Lumenal" evidence="1">
    <location>
        <begin position="25"/>
        <end position="74"/>
    </location>
</feature>
<feature type="transmembrane region" description="Helical" evidence="2">
    <location>
        <begin position="75"/>
        <end position="95"/>
    </location>
</feature>
<feature type="transmembrane region" description="Helical" evidence="2">
    <location>
        <begin position="96"/>
        <end position="107"/>
    </location>
</feature>
<feature type="topological domain" description="Lumenal" evidence="1">
    <location>
        <begin position="108"/>
        <end position="141"/>
    </location>
</feature>
<feature type="transmembrane region" description="Helical" evidence="2">
    <location>
        <begin position="142"/>
        <end position="166"/>
    </location>
</feature>
<feature type="transmembrane region" description="Helical" evidence="2">
    <location>
        <begin position="171"/>
        <end position="183"/>
    </location>
</feature>
<feature type="transmembrane region" description="Helical" evidence="2">
    <location>
        <begin position="184"/>
        <end position="206"/>
    </location>
</feature>
<feature type="transmembrane region" description="Helical" evidence="2">
    <location>
        <begin position="226"/>
        <end position="248"/>
    </location>
</feature>
<feature type="topological domain" description="Lumenal" evidence="1">
    <location>
        <begin position="249"/>
        <end position="443"/>
    </location>
</feature>
<feature type="transmembrane region" description="Helical" evidence="2">
    <location>
        <begin position="444"/>
        <end position="461"/>
    </location>
</feature>
<feature type="transmembrane region" description="Helical" evidence="2">
    <location>
        <begin position="462"/>
        <end position="473"/>
    </location>
</feature>
<feature type="topological domain" description="Lumenal" evidence="2">
    <location>
        <begin position="474"/>
        <end position="489"/>
    </location>
</feature>
<feature type="transmembrane region" description="Helical" evidence="2">
    <location>
        <begin position="490"/>
        <end position="510"/>
    </location>
</feature>
<feature type="topological domain" description="Cytoplasmic" evidence="2">
    <location>
        <begin position="511"/>
        <end position="516"/>
    </location>
</feature>
<feature type="active site" evidence="3">
    <location>
        <position position="169"/>
    </location>
</feature>
<feature type="binding site" evidence="3">
    <location>
        <position position="168"/>
    </location>
    <ligand>
        <name>Zn(2+)</name>
        <dbReference type="ChEBI" id="CHEBI:29105"/>
        <note>catalytic</note>
    </ligand>
</feature>
<feature type="binding site" evidence="3">
    <location>
        <position position="172"/>
    </location>
    <ligand>
        <name>Zn(2+)</name>
        <dbReference type="ChEBI" id="CHEBI:29105"/>
        <note>catalytic</note>
    </ligand>
</feature>
<feature type="glycosylation site" description="N-linked (GlcNAc...) asparagine" evidence="2">
    <location>
        <position position="334"/>
    </location>
</feature>
<accession>Q0III2</accession>
<proteinExistence type="evidence at transcript level"/>
<dbReference type="EC" id="3.4.24.85" evidence="1"/>
<dbReference type="EMBL" id="BC122628">
    <property type="protein sequence ID" value="AAI22629.1"/>
    <property type="molecule type" value="mRNA"/>
</dbReference>
<dbReference type="RefSeq" id="NP_001069449.1">
    <property type="nucleotide sequence ID" value="NM_001075981.1"/>
</dbReference>
<dbReference type="FunCoup" id="Q0III2">
    <property type="interactions" value="2824"/>
</dbReference>
<dbReference type="STRING" id="9913.ENSBTAP00000062860"/>
<dbReference type="MEROPS" id="M50.001"/>
<dbReference type="GlyCosmos" id="Q0III2">
    <property type="glycosylation" value="1 site, No reported glycans"/>
</dbReference>
<dbReference type="GlyGen" id="Q0III2">
    <property type="glycosylation" value="1 site"/>
</dbReference>
<dbReference type="PaxDb" id="9913-ENSBTAP00000010764"/>
<dbReference type="Ensembl" id="ENSBTAT00000010764.5">
    <property type="protein sequence ID" value="ENSBTAP00000010764.5"/>
    <property type="gene ID" value="ENSBTAG00000008183.5"/>
</dbReference>
<dbReference type="GeneID" id="533134"/>
<dbReference type="KEGG" id="bta:533134"/>
<dbReference type="CTD" id="51360"/>
<dbReference type="VEuPathDB" id="HostDB:ENSBTAG00000008183"/>
<dbReference type="VGNC" id="VGNC:31292">
    <property type="gene designation" value="MBTPS2"/>
</dbReference>
<dbReference type="eggNOG" id="KOG2921">
    <property type="taxonomic scope" value="Eukaryota"/>
</dbReference>
<dbReference type="GeneTree" id="ENSGT00510000048066"/>
<dbReference type="HOGENOM" id="CLU_032523_1_0_1"/>
<dbReference type="InParanoid" id="Q0III2"/>
<dbReference type="OMA" id="FYSWGRW"/>
<dbReference type="OrthoDB" id="10264072at2759"/>
<dbReference type="TreeFam" id="TF314478"/>
<dbReference type="Reactome" id="R-BTA-1655829">
    <property type="pathway name" value="Regulation of cholesterol biosynthesis by SREBP (SREBF)"/>
</dbReference>
<dbReference type="Reactome" id="R-BTA-381033">
    <property type="pathway name" value="ATF6 (ATF6-alpha) activates chaperones"/>
</dbReference>
<dbReference type="Reactome" id="R-BTA-8874177">
    <property type="pathway name" value="ATF6B (ATF6-beta) activates chaperones"/>
</dbReference>
<dbReference type="Reactome" id="R-BTA-8874211">
    <property type="pathway name" value="CREB3 factors activate genes"/>
</dbReference>
<dbReference type="Proteomes" id="UP000009136">
    <property type="component" value="Chromosome X"/>
</dbReference>
<dbReference type="Bgee" id="ENSBTAG00000008183">
    <property type="expression patterns" value="Expressed in granulosa cell and 106 other cell types or tissues"/>
</dbReference>
<dbReference type="GO" id="GO:0005737">
    <property type="term" value="C:cytoplasm"/>
    <property type="evidence" value="ECO:0000250"/>
    <property type="project" value="UniProtKB"/>
</dbReference>
<dbReference type="GO" id="GO:0000139">
    <property type="term" value="C:Golgi membrane"/>
    <property type="evidence" value="ECO:0007669"/>
    <property type="project" value="UniProtKB-SubCell"/>
</dbReference>
<dbReference type="GO" id="GO:0046872">
    <property type="term" value="F:metal ion binding"/>
    <property type="evidence" value="ECO:0007669"/>
    <property type="project" value="UniProtKB-KW"/>
</dbReference>
<dbReference type="GO" id="GO:0004222">
    <property type="term" value="F:metalloendopeptidase activity"/>
    <property type="evidence" value="ECO:0000318"/>
    <property type="project" value="GO_Central"/>
</dbReference>
<dbReference type="GO" id="GO:0140537">
    <property type="term" value="F:transcription regulator activator activity"/>
    <property type="evidence" value="ECO:0007669"/>
    <property type="project" value="Ensembl"/>
</dbReference>
<dbReference type="GO" id="GO:0070977">
    <property type="term" value="P:bone maturation"/>
    <property type="evidence" value="ECO:0000250"/>
    <property type="project" value="UniProtKB"/>
</dbReference>
<dbReference type="GO" id="GO:0008203">
    <property type="term" value="P:cholesterol metabolic process"/>
    <property type="evidence" value="ECO:0007669"/>
    <property type="project" value="UniProtKB-KW"/>
</dbReference>
<dbReference type="GO" id="GO:0031293">
    <property type="term" value="P:membrane protein intracellular domain proteolysis"/>
    <property type="evidence" value="ECO:0000318"/>
    <property type="project" value="GO_Central"/>
</dbReference>
<dbReference type="GO" id="GO:0007095">
    <property type="term" value="P:mitotic G2 DNA damage checkpoint signaling"/>
    <property type="evidence" value="ECO:0007669"/>
    <property type="project" value="Ensembl"/>
</dbReference>
<dbReference type="GO" id="GO:0045542">
    <property type="term" value="P:positive regulation of cholesterol biosynthetic process"/>
    <property type="evidence" value="ECO:0007669"/>
    <property type="project" value="Ensembl"/>
</dbReference>
<dbReference type="GO" id="GO:0045944">
    <property type="term" value="P:positive regulation of transcription by RNA polymerase II"/>
    <property type="evidence" value="ECO:0007669"/>
    <property type="project" value="Ensembl"/>
</dbReference>
<dbReference type="GO" id="GO:0051604">
    <property type="term" value="P:protein maturation"/>
    <property type="evidence" value="ECO:0007669"/>
    <property type="project" value="Ensembl"/>
</dbReference>
<dbReference type="GO" id="GO:1905897">
    <property type="term" value="P:regulation of response to endoplasmic reticulum stress"/>
    <property type="evidence" value="ECO:0000318"/>
    <property type="project" value="GO_Central"/>
</dbReference>
<dbReference type="GO" id="GO:0034976">
    <property type="term" value="P:response to endoplasmic reticulum stress"/>
    <property type="evidence" value="ECO:0007669"/>
    <property type="project" value="Ensembl"/>
</dbReference>
<dbReference type="CDD" id="cd06775">
    <property type="entry name" value="cpPDZ_MBTPS2-like"/>
    <property type="match status" value="1"/>
</dbReference>
<dbReference type="CDD" id="cd06162">
    <property type="entry name" value="S2P-M50_PDZ_SREBP"/>
    <property type="match status" value="1"/>
</dbReference>
<dbReference type="Gene3D" id="2.30.42.10">
    <property type="match status" value="1"/>
</dbReference>
<dbReference type="InterPro" id="IPR001193">
    <property type="entry name" value="MBTPS2"/>
</dbReference>
<dbReference type="InterPro" id="IPR036034">
    <property type="entry name" value="PDZ_sf"/>
</dbReference>
<dbReference type="InterPro" id="IPR008915">
    <property type="entry name" value="Peptidase_M50"/>
</dbReference>
<dbReference type="PANTHER" id="PTHR13325:SF3">
    <property type="entry name" value="MEMBRANE-BOUND TRANSCRIPTION FACTOR SITE-2 PROTEASE"/>
    <property type="match status" value="1"/>
</dbReference>
<dbReference type="PANTHER" id="PTHR13325">
    <property type="entry name" value="PROTEASE M50 MEMBRANE-BOUND TRANSCRIPTION FACTOR SITE 2 PROTEASE"/>
    <property type="match status" value="1"/>
</dbReference>
<dbReference type="Pfam" id="PF02163">
    <property type="entry name" value="Peptidase_M50"/>
    <property type="match status" value="1"/>
</dbReference>
<dbReference type="PRINTS" id="PR01000">
    <property type="entry name" value="SREBPS2PTASE"/>
</dbReference>
<dbReference type="SUPFAM" id="SSF50156">
    <property type="entry name" value="PDZ domain-like"/>
    <property type="match status" value="1"/>
</dbReference>
<dbReference type="PROSITE" id="PS00142">
    <property type="entry name" value="ZINC_PROTEASE"/>
    <property type="match status" value="1"/>
</dbReference>
<evidence type="ECO:0000250" key="1">
    <source>
        <dbReference type="UniProtKB" id="O43462"/>
    </source>
</evidence>
<evidence type="ECO:0000255" key="2"/>
<evidence type="ECO:0000255" key="3">
    <source>
        <dbReference type="PROSITE-ProRule" id="PRU10095"/>
    </source>
</evidence>
<evidence type="ECO:0000305" key="4"/>
<protein>
    <recommendedName>
        <fullName evidence="1">Membrane-bound transcription factor site-2 protease</fullName>
        <ecNumber evidence="1">3.4.24.85</ecNumber>
    </recommendedName>
    <alternativeName>
        <fullName evidence="1">Endopeptidase S2P</fullName>
    </alternativeName>
</protein>
<name>MBTP2_BOVIN</name>
<keyword id="KW-0153">Cholesterol metabolism</keyword>
<keyword id="KW-0963">Cytoplasm</keyword>
<keyword id="KW-0325">Glycoprotein</keyword>
<keyword id="KW-0333">Golgi apparatus</keyword>
<keyword id="KW-0378">Hydrolase</keyword>
<keyword id="KW-0443">Lipid metabolism</keyword>
<keyword id="KW-0472">Membrane</keyword>
<keyword id="KW-0479">Metal-binding</keyword>
<keyword id="KW-0482">Metalloprotease</keyword>
<keyword id="KW-0645">Protease</keyword>
<keyword id="KW-1185">Reference proteome</keyword>
<keyword id="KW-0753">Steroid metabolism</keyword>
<keyword id="KW-1207">Sterol metabolism</keyword>
<keyword id="KW-0812">Transmembrane</keyword>
<keyword id="KW-1133">Transmembrane helix</keyword>
<keyword id="KW-0862">Zinc</keyword>